<dbReference type="EC" id="1.1.1.267" evidence="1"/>
<dbReference type="EMBL" id="CP001079">
    <property type="protein sequence ID" value="ACM49397.1"/>
    <property type="molecule type" value="Genomic_DNA"/>
</dbReference>
<dbReference type="SMR" id="B9KIT5"/>
<dbReference type="STRING" id="320483.AMF_548"/>
<dbReference type="KEGG" id="amf:AMF_548"/>
<dbReference type="eggNOG" id="COG0743">
    <property type="taxonomic scope" value="Bacteria"/>
</dbReference>
<dbReference type="HOGENOM" id="CLU_035714_0_0_5"/>
<dbReference type="UniPathway" id="UPA00056">
    <property type="reaction ID" value="UER00092"/>
</dbReference>
<dbReference type="Proteomes" id="UP000007307">
    <property type="component" value="Chromosome"/>
</dbReference>
<dbReference type="GO" id="GO:0030604">
    <property type="term" value="F:1-deoxy-D-xylulose-5-phosphate reductoisomerase activity"/>
    <property type="evidence" value="ECO:0007669"/>
    <property type="project" value="UniProtKB-UniRule"/>
</dbReference>
<dbReference type="GO" id="GO:0030145">
    <property type="term" value="F:manganese ion binding"/>
    <property type="evidence" value="ECO:0007669"/>
    <property type="project" value="TreeGrafter"/>
</dbReference>
<dbReference type="GO" id="GO:0070402">
    <property type="term" value="F:NADPH binding"/>
    <property type="evidence" value="ECO:0007669"/>
    <property type="project" value="InterPro"/>
</dbReference>
<dbReference type="GO" id="GO:0051484">
    <property type="term" value="P:isopentenyl diphosphate biosynthetic process, methylerythritol 4-phosphate pathway involved in terpenoid biosynthetic process"/>
    <property type="evidence" value="ECO:0007669"/>
    <property type="project" value="TreeGrafter"/>
</dbReference>
<dbReference type="FunFam" id="3.40.50.720:FF:000045">
    <property type="entry name" value="1-deoxy-D-xylulose 5-phosphate reductoisomerase"/>
    <property type="match status" value="1"/>
</dbReference>
<dbReference type="Gene3D" id="1.10.1740.10">
    <property type="match status" value="1"/>
</dbReference>
<dbReference type="Gene3D" id="3.40.50.720">
    <property type="entry name" value="NAD(P)-binding Rossmann-like Domain"/>
    <property type="match status" value="1"/>
</dbReference>
<dbReference type="HAMAP" id="MF_00183">
    <property type="entry name" value="DXP_reductoisom"/>
    <property type="match status" value="1"/>
</dbReference>
<dbReference type="InterPro" id="IPR003821">
    <property type="entry name" value="DXP_reductoisomerase"/>
</dbReference>
<dbReference type="InterPro" id="IPR013644">
    <property type="entry name" value="DXP_reductoisomerase_C"/>
</dbReference>
<dbReference type="InterPro" id="IPR013512">
    <property type="entry name" value="DXP_reductoisomerase_N"/>
</dbReference>
<dbReference type="InterPro" id="IPR026877">
    <property type="entry name" value="DXPR_C"/>
</dbReference>
<dbReference type="InterPro" id="IPR036169">
    <property type="entry name" value="DXPR_C_sf"/>
</dbReference>
<dbReference type="InterPro" id="IPR036291">
    <property type="entry name" value="NAD(P)-bd_dom_sf"/>
</dbReference>
<dbReference type="NCBIfam" id="TIGR00243">
    <property type="entry name" value="Dxr"/>
    <property type="match status" value="1"/>
</dbReference>
<dbReference type="PANTHER" id="PTHR30525">
    <property type="entry name" value="1-DEOXY-D-XYLULOSE 5-PHOSPHATE REDUCTOISOMERASE"/>
    <property type="match status" value="1"/>
</dbReference>
<dbReference type="PANTHER" id="PTHR30525:SF0">
    <property type="entry name" value="1-DEOXY-D-XYLULOSE 5-PHOSPHATE REDUCTOISOMERASE, CHLOROPLASTIC"/>
    <property type="match status" value="1"/>
</dbReference>
<dbReference type="Pfam" id="PF08436">
    <property type="entry name" value="DXP_redisom_C"/>
    <property type="match status" value="1"/>
</dbReference>
<dbReference type="Pfam" id="PF02670">
    <property type="entry name" value="DXP_reductoisom"/>
    <property type="match status" value="1"/>
</dbReference>
<dbReference type="Pfam" id="PF13288">
    <property type="entry name" value="DXPR_C"/>
    <property type="match status" value="1"/>
</dbReference>
<dbReference type="PIRSF" id="PIRSF006205">
    <property type="entry name" value="Dxp_reductismrs"/>
    <property type="match status" value="1"/>
</dbReference>
<dbReference type="SUPFAM" id="SSF69055">
    <property type="entry name" value="1-deoxy-D-xylulose-5-phosphate reductoisomerase, C-terminal domain"/>
    <property type="match status" value="1"/>
</dbReference>
<dbReference type="SUPFAM" id="SSF55347">
    <property type="entry name" value="Glyceraldehyde-3-phosphate dehydrogenase-like, C-terminal domain"/>
    <property type="match status" value="1"/>
</dbReference>
<dbReference type="SUPFAM" id="SSF51735">
    <property type="entry name" value="NAD(P)-binding Rossmann-fold domains"/>
    <property type="match status" value="1"/>
</dbReference>
<protein>
    <recommendedName>
        <fullName evidence="1">1-deoxy-D-xylulose 5-phosphate reductoisomerase</fullName>
        <shortName evidence="1">DXP reductoisomerase</shortName>
        <ecNumber evidence="1">1.1.1.267</ecNumber>
    </recommendedName>
    <alternativeName>
        <fullName evidence="1">1-deoxyxylulose-5-phosphate reductoisomerase</fullName>
    </alternativeName>
    <alternativeName>
        <fullName evidence="1">2-C-methyl-D-erythritol 4-phosphate synthase</fullName>
    </alternativeName>
</protein>
<sequence length="396" mass="42383">MLHMGRKRVSVFGSTGCIGQKAVQILRDNPDDFEVVALVAKQDAHLLASQARLLSANMAVVAEDAAYETLRELLRGTCVEVGAGTAGVMDAASRDVDSAVMAITGIAALHPVIRLIKSGVKSIALANKESVVCGGELLINAAKQTGVNIVPVDSEHNAVFQILAHDGCVARVTLTASGGPFLRWTREQMQAVTPSDALAHPVWKMGRKISVDSATMVNKALEVIEAHYLFSLDPDSIDVTVHPESVVHAVAAYPNGTSISLMSVPDMGIPTLHALYWPQSATVCGSTLDLASYGKLTFMEPDLERFPALGFGFEALRSSKPRAACIALNAANEVAVEAFLNFEIAFLDIPNIIMSAMDKLACCEVNSISEAGEYDLICRARTREICDTLKVSEFIR</sequence>
<evidence type="ECO:0000255" key="1">
    <source>
        <dbReference type="HAMAP-Rule" id="MF_00183"/>
    </source>
</evidence>
<accession>B9KIT5</accession>
<organism>
    <name type="scientific">Anaplasma marginale (strain Florida)</name>
    <dbReference type="NCBI Taxonomy" id="320483"/>
    <lineage>
        <taxon>Bacteria</taxon>
        <taxon>Pseudomonadati</taxon>
        <taxon>Pseudomonadota</taxon>
        <taxon>Alphaproteobacteria</taxon>
        <taxon>Rickettsiales</taxon>
        <taxon>Anaplasmataceae</taxon>
        <taxon>Anaplasma</taxon>
    </lineage>
</organism>
<name>DXR_ANAMF</name>
<keyword id="KW-0414">Isoprene biosynthesis</keyword>
<keyword id="KW-0464">Manganese</keyword>
<keyword id="KW-0479">Metal-binding</keyword>
<keyword id="KW-0521">NADP</keyword>
<keyword id="KW-0560">Oxidoreductase</keyword>
<keyword id="KW-1185">Reference proteome</keyword>
<gene>
    <name evidence="1" type="primary">dxr</name>
    <name type="ordered locus">AMF_548</name>
</gene>
<proteinExistence type="inferred from homology"/>
<reference key="1">
    <citation type="journal article" date="2009" name="BMC Genomics">
        <title>Conservation in the face of diversity: multistrain analysis of an intracellular bacterium.</title>
        <authorList>
            <person name="Dark M.J."/>
            <person name="Herndon D.R."/>
            <person name="Kappmeyer L.S."/>
            <person name="Gonzales M.P."/>
            <person name="Nordeen E."/>
            <person name="Palmer G.H."/>
            <person name="Knowles D.P. Jr."/>
            <person name="Brayton K.A."/>
        </authorList>
    </citation>
    <scope>NUCLEOTIDE SEQUENCE [LARGE SCALE GENOMIC DNA]</scope>
    <source>
        <strain>Florida</strain>
    </source>
</reference>
<feature type="chain" id="PRO_1000189853" description="1-deoxy-D-xylulose 5-phosphate reductoisomerase">
    <location>
        <begin position="1"/>
        <end position="396"/>
    </location>
</feature>
<feature type="binding site" evidence="1">
    <location>
        <position position="15"/>
    </location>
    <ligand>
        <name>NADPH</name>
        <dbReference type="ChEBI" id="CHEBI:57783"/>
    </ligand>
</feature>
<feature type="binding site" evidence="1">
    <location>
        <position position="16"/>
    </location>
    <ligand>
        <name>NADPH</name>
        <dbReference type="ChEBI" id="CHEBI:57783"/>
    </ligand>
</feature>
<feature type="binding site" evidence="1">
    <location>
        <position position="18"/>
    </location>
    <ligand>
        <name>NADPH</name>
        <dbReference type="ChEBI" id="CHEBI:57783"/>
    </ligand>
</feature>
<feature type="binding site" evidence="1">
    <location>
        <position position="127"/>
    </location>
    <ligand>
        <name>NADPH</name>
        <dbReference type="ChEBI" id="CHEBI:57783"/>
    </ligand>
</feature>
<feature type="binding site" evidence="1">
    <location>
        <position position="128"/>
    </location>
    <ligand>
        <name>1-deoxy-D-xylulose 5-phosphate</name>
        <dbReference type="ChEBI" id="CHEBI:57792"/>
    </ligand>
</feature>
<feature type="binding site" evidence="1">
    <location>
        <position position="129"/>
    </location>
    <ligand>
        <name>NADPH</name>
        <dbReference type="ChEBI" id="CHEBI:57783"/>
    </ligand>
</feature>
<feature type="binding site" evidence="1">
    <location>
        <position position="153"/>
    </location>
    <ligand>
        <name>Mn(2+)</name>
        <dbReference type="ChEBI" id="CHEBI:29035"/>
    </ligand>
</feature>
<feature type="binding site" evidence="1">
    <location>
        <position position="154"/>
    </location>
    <ligand>
        <name>1-deoxy-D-xylulose 5-phosphate</name>
        <dbReference type="ChEBI" id="CHEBI:57792"/>
    </ligand>
</feature>
<feature type="binding site" evidence="1">
    <location>
        <position position="155"/>
    </location>
    <ligand>
        <name>1-deoxy-D-xylulose 5-phosphate</name>
        <dbReference type="ChEBI" id="CHEBI:57792"/>
    </ligand>
</feature>
<feature type="binding site" evidence="1">
    <location>
        <position position="155"/>
    </location>
    <ligand>
        <name>Mn(2+)</name>
        <dbReference type="ChEBI" id="CHEBI:29035"/>
    </ligand>
</feature>
<feature type="binding site" evidence="1">
    <location>
        <position position="177"/>
    </location>
    <ligand>
        <name>1-deoxy-D-xylulose 5-phosphate</name>
        <dbReference type="ChEBI" id="CHEBI:57792"/>
    </ligand>
</feature>
<feature type="binding site" evidence="1">
    <location>
        <position position="200"/>
    </location>
    <ligand>
        <name>1-deoxy-D-xylulose 5-phosphate</name>
        <dbReference type="ChEBI" id="CHEBI:57792"/>
    </ligand>
</feature>
<feature type="binding site" evidence="1">
    <location>
        <position position="206"/>
    </location>
    <ligand>
        <name>NADPH</name>
        <dbReference type="ChEBI" id="CHEBI:57783"/>
    </ligand>
</feature>
<feature type="binding site" evidence="1">
    <location>
        <position position="213"/>
    </location>
    <ligand>
        <name>1-deoxy-D-xylulose 5-phosphate</name>
        <dbReference type="ChEBI" id="CHEBI:57792"/>
    </ligand>
</feature>
<feature type="binding site" evidence="1">
    <location>
        <position position="218"/>
    </location>
    <ligand>
        <name>1-deoxy-D-xylulose 5-phosphate</name>
        <dbReference type="ChEBI" id="CHEBI:57792"/>
    </ligand>
</feature>
<feature type="binding site" evidence="1">
    <location>
        <position position="219"/>
    </location>
    <ligand>
        <name>1-deoxy-D-xylulose 5-phosphate</name>
        <dbReference type="ChEBI" id="CHEBI:57792"/>
    </ligand>
</feature>
<feature type="binding site" evidence="1">
    <location>
        <position position="222"/>
    </location>
    <ligand>
        <name>1-deoxy-D-xylulose 5-phosphate</name>
        <dbReference type="ChEBI" id="CHEBI:57792"/>
    </ligand>
</feature>
<feature type="binding site" evidence="1">
    <location>
        <position position="222"/>
    </location>
    <ligand>
        <name>Mn(2+)</name>
        <dbReference type="ChEBI" id="CHEBI:29035"/>
    </ligand>
</feature>
<comment type="function">
    <text evidence="1">Catalyzes the NADPH-dependent rearrangement and reduction of 1-deoxy-D-xylulose-5-phosphate (DXP) to 2-C-methyl-D-erythritol 4-phosphate (MEP).</text>
</comment>
<comment type="catalytic activity">
    <reaction evidence="1">
        <text>2-C-methyl-D-erythritol 4-phosphate + NADP(+) = 1-deoxy-D-xylulose 5-phosphate + NADPH + H(+)</text>
        <dbReference type="Rhea" id="RHEA:13717"/>
        <dbReference type="ChEBI" id="CHEBI:15378"/>
        <dbReference type="ChEBI" id="CHEBI:57783"/>
        <dbReference type="ChEBI" id="CHEBI:57792"/>
        <dbReference type="ChEBI" id="CHEBI:58262"/>
        <dbReference type="ChEBI" id="CHEBI:58349"/>
        <dbReference type="EC" id="1.1.1.267"/>
    </reaction>
    <physiologicalReaction direction="right-to-left" evidence="1">
        <dbReference type="Rhea" id="RHEA:13719"/>
    </physiologicalReaction>
</comment>
<comment type="cofactor">
    <cofactor evidence="1">
        <name>Mg(2+)</name>
        <dbReference type="ChEBI" id="CHEBI:18420"/>
    </cofactor>
    <cofactor evidence="1">
        <name>Mn(2+)</name>
        <dbReference type="ChEBI" id="CHEBI:29035"/>
    </cofactor>
</comment>
<comment type="pathway">
    <text evidence="1">Isoprenoid biosynthesis; isopentenyl diphosphate biosynthesis via DXP pathway; isopentenyl diphosphate from 1-deoxy-D-xylulose 5-phosphate: step 1/6.</text>
</comment>
<comment type="similarity">
    <text evidence="1">Belongs to the DXR family.</text>
</comment>